<dbReference type="EMBL" id="CR628337">
    <property type="protein sequence ID" value="CAH14571.1"/>
    <property type="molecule type" value="Genomic_DNA"/>
</dbReference>
<dbReference type="RefSeq" id="WP_011214603.1">
    <property type="nucleotide sequence ID" value="NC_006369.1"/>
</dbReference>
<dbReference type="SMR" id="Q5WZP1"/>
<dbReference type="KEGG" id="lpf:lpl0340"/>
<dbReference type="LegioList" id="lpl0340"/>
<dbReference type="HOGENOM" id="CLU_074944_0_0_6"/>
<dbReference type="UniPathway" id="UPA00345"/>
<dbReference type="Proteomes" id="UP000002517">
    <property type="component" value="Chromosome"/>
</dbReference>
<dbReference type="GO" id="GO:0005737">
    <property type="term" value="C:cytoplasm"/>
    <property type="evidence" value="ECO:0007669"/>
    <property type="project" value="UniProtKB-SubCell"/>
</dbReference>
<dbReference type="GO" id="GO:0003746">
    <property type="term" value="F:translation elongation factor activity"/>
    <property type="evidence" value="ECO:0007669"/>
    <property type="project" value="UniProtKB-UniRule"/>
</dbReference>
<dbReference type="GO" id="GO:0043043">
    <property type="term" value="P:peptide biosynthetic process"/>
    <property type="evidence" value="ECO:0007669"/>
    <property type="project" value="InterPro"/>
</dbReference>
<dbReference type="CDD" id="cd04470">
    <property type="entry name" value="S1_EF-P_repeat_1"/>
    <property type="match status" value="1"/>
</dbReference>
<dbReference type="CDD" id="cd05794">
    <property type="entry name" value="S1_EF-P_repeat_2"/>
    <property type="match status" value="1"/>
</dbReference>
<dbReference type="FunFam" id="2.30.30.30:FF:000003">
    <property type="entry name" value="Elongation factor P"/>
    <property type="match status" value="1"/>
</dbReference>
<dbReference type="FunFam" id="2.40.50.140:FF:000004">
    <property type="entry name" value="Elongation factor P"/>
    <property type="match status" value="1"/>
</dbReference>
<dbReference type="FunFam" id="2.40.50.140:FF:000009">
    <property type="entry name" value="Elongation factor P"/>
    <property type="match status" value="1"/>
</dbReference>
<dbReference type="Gene3D" id="2.30.30.30">
    <property type="match status" value="1"/>
</dbReference>
<dbReference type="Gene3D" id="2.40.50.140">
    <property type="entry name" value="Nucleic acid-binding proteins"/>
    <property type="match status" value="2"/>
</dbReference>
<dbReference type="HAMAP" id="MF_00141">
    <property type="entry name" value="EF_P"/>
    <property type="match status" value="1"/>
</dbReference>
<dbReference type="InterPro" id="IPR015365">
    <property type="entry name" value="Elong-fact-P_C"/>
</dbReference>
<dbReference type="InterPro" id="IPR012340">
    <property type="entry name" value="NA-bd_OB-fold"/>
</dbReference>
<dbReference type="InterPro" id="IPR014722">
    <property type="entry name" value="Rib_uL2_dom2"/>
</dbReference>
<dbReference type="InterPro" id="IPR020599">
    <property type="entry name" value="Transl_elong_fac_P/YeiP"/>
</dbReference>
<dbReference type="InterPro" id="IPR013185">
    <property type="entry name" value="Transl_elong_KOW-like"/>
</dbReference>
<dbReference type="InterPro" id="IPR001059">
    <property type="entry name" value="Transl_elong_P/YeiP_cen"/>
</dbReference>
<dbReference type="InterPro" id="IPR013852">
    <property type="entry name" value="Transl_elong_P/YeiP_CS"/>
</dbReference>
<dbReference type="InterPro" id="IPR011768">
    <property type="entry name" value="Transl_elongation_fac_P"/>
</dbReference>
<dbReference type="InterPro" id="IPR008991">
    <property type="entry name" value="Translation_prot_SH3-like_sf"/>
</dbReference>
<dbReference type="NCBIfam" id="TIGR00038">
    <property type="entry name" value="efp"/>
    <property type="match status" value="1"/>
</dbReference>
<dbReference type="NCBIfam" id="NF001810">
    <property type="entry name" value="PRK00529.1"/>
    <property type="match status" value="1"/>
</dbReference>
<dbReference type="PANTHER" id="PTHR30053">
    <property type="entry name" value="ELONGATION FACTOR P"/>
    <property type="match status" value="1"/>
</dbReference>
<dbReference type="PANTHER" id="PTHR30053:SF12">
    <property type="entry name" value="ELONGATION FACTOR P (EF-P) FAMILY PROTEIN"/>
    <property type="match status" value="1"/>
</dbReference>
<dbReference type="Pfam" id="PF01132">
    <property type="entry name" value="EFP"/>
    <property type="match status" value="1"/>
</dbReference>
<dbReference type="Pfam" id="PF08207">
    <property type="entry name" value="EFP_N"/>
    <property type="match status" value="1"/>
</dbReference>
<dbReference type="Pfam" id="PF09285">
    <property type="entry name" value="Elong-fact-P_C"/>
    <property type="match status" value="1"/>
</dbReference>
<dbReference type="PIRSF" id="PIRSF005901">
    <property type="entry name" value="EF-P"/>
    <property type="match status" value="1"/>
</dbReference>
<dbReference type="SMART" id="SM01185">
    <property type="entry name" value="EFP"/>
    <property type="match status" value="1"/>
</dbReference>
<dbReference type="SMART" id="SM00841">
    <property type="entry name" value="Elong-fact-P_C"/>
    <property type="match status" value="1"/>
</dbReference>
<dbReference type="SUPFAM" id="SSF50249">
    <property type="entry name" value="Nucleic acid-binding proteins"/>
    <property type="match status" value="2"/>
</dbReference>
<dbReference type="SUPFAM" id="SSF50104">
    <property type="entry name" value="Translation proteins SH3-like domain"/>
    <property type="match status" value="1"/>
</dbReference>
<dbReference type="PROSITE" id="PS01275">
    <property type="entry name" value="EFP"/>
    <property type="match status" value="1"/>
</dbReference>
<protein>
    <recommendedName>
        <fullName evidence="1">Elongation factor P</fullName>
        <shortName evidence="1">EF-P</shortName>
    </recommendedName>
</protein>
<feature type="chain" id="PRO_0000094271" description="Elongation factor P">
    <location>
        <begin position="1"/>
        <end position="189"/>
    </location>
</feature>
<feature type="modified residue" description="N6-(3,6-diaminohexanoyl)-5-hydroxylysine" evidence="1">
    <location>
        <position position="34"/>
    </location>
</feature>
<organism>
    <name type="scientific">Legionella pneumophila (strain Lens)</name>
    <dbReference type="NCBI Taxonomy" id="297245"/>
    <lineage>
        <taxon>Bacteria</taxon>
        <taxon>Pseudomonadati</taxon>
        <taxon>Pseudomonadota</taxon>
        <taxon>Gammaproteobacteria</taxon>
        <taxon>Legionellales</taxon>
        <taxon>Legionellaceae</taxon>
        <taxon>Legionella</taxon>
    </lineage>
</organism>
<sequence>MAVYSTNEFKNGLKVMVDDAPCSILDCEFVKPGKGQAFTRIKIRNLKTGRVVERTFKSGDTLPSADVADVEMQYLYNDGEHWHFMVPDTFEQYAVTENILADAAQWLKEQDVCVVTLWNNEPIQVTPPNFVILAITETDPGLKGDTSGGGGKPATLETGAVVRVPLFVQTGELIKVDTRKGEYVSRAKE</sequence>
<accession>Q5WZP1</accession>
<gene>
    <name evidence="1" type="primary">efp</name>
    <name type="ordered locus">lpl0340</name>
</gene>
<reference key="1">
    <citation type="journal article" date="2004" name="Nat. Genet.">
        <title>Evidence in the Legionella pneumophila genome for exploitation of host cell functions and high genome plasticity.</title>
        <authorList>
            <person name="Cazalet C."/>
            <person name="Rusniok C."/>
            <person name="Brueggemann H."/>
            <person name="Zidane N."/>
            <person name="Magnier A."/>
            <person name="Ma L."/>
            <person name="Tichit M."/>
            <person name="Jarraud S."/>
            <person name="Bouchier C."/>
            <person name="Vandenesch F."/>
            <person name="Kunst F."/>
            <person name="Etienne J."/>
            <person name="Glaser P."/>
            <person name="Buchrieser C."/>
        </authorList>
    </citation>
    <scope>NUCLEOTIDE SEQUENCE [LARGE SCALE GENOMIC DNA]</scope>
    <source>
        <strain>Lens</strain>
    </source>
</reference>
<comment type="function">
    <text evidence="1">Involved in peptide bond synthesis. Alleviates ribosome stalling that occurs when 3 or more consecutive Pro residues or the sequence PPG is present in a protein, possibly by augmenting the peptidyl transferase activity of the ribosome. Modification of Lys-34 is required for alleviation.</text>
</comment>
<comment type="pathway">
    <text evidence="1">Protein biosynthesis; polypeptide chain elongation.</text>
</comment>
<comment type="subcellular location">
    <subcellularLocation>
        <location evidence="1">Cytoplasm</location>
    </subcellularLocation>
</comment>
<comment type="PTM">
    <text evidence="1">May be beta-lysylated on the epsilon-amino group of Lys-34 by the combined action of EpmA and EpmB, and then hydroxylated on the C5 position of the same residue by EpmC (if this protein is present). Lysylation is critical for the stimulatory effect of EF-P on peptide-bond formation. The lysylation moiety may extend toward the peptidyltransferase center and stabilize the terminal 3-CCA end of the tRNA. Hydroxylation of the C5 position on Lys-34 may allow additional potential stabilizing hydrogen-bond interactions with the P-tRNA.</text>
</comment>
<comment type="similarity">
    <text evidence="1">Belongs to the elongation factor P family.</text>
</comment>
<evidence type="ECO:0000255" key="1">
    <source>
        <dbReference type="HAMAP-Rule" id="MF_00141"/>
    </source>
</evidence>
<name>EFP_LEGPL</name>
<keyword id="KW-0963">Cytoplasm</keyword>
<keyword id="KW-0251">Elongation factor</keyword>
<keyword id="KW-0379">Hydroxylation</keyword>
<keyword id="KW-0648">Protein biosynthesis</keyword>
<proteinExistence type="inferred from homology"/>